<keyword id="KW-0002">3D-structure</keyword>
<keyword id="KW-0025">Alternative splicing</keyword>
<keyword id="KW-0130">Cell adhesion</keyword>
<keyword id="KW-0965">Cell junction</keyword>
<keyword id="KW-1003">Cell membrane</keyword>
<keyword id="KW-0963">Cytoplasm</keyword>
<keyword id="KW-0206">Cytoskeleton</keyword>
<keyword id="KW-1017">Isopeptide bond</keyword>
<keyword id="KW-0472">Membrane</keyword>
<keyword id="KW-0507">mRNA processing</keyword>
<keyword id="KW-0539">Nucleus</keyword>
<keyword id="KW-0597">Phosphoprotein</keyword>
<keyword id="KW-1267">Proteomics identification</keyword>
<keyword id="KW-1185">Reference proteome</keyword>
<keyword id="KW-0677">Repeat</keyword>
<keyword id="KW-0796">Tight junction</keyword>
<keyword id="KW-0832">Ubl conjugation</keyword>
<proteinExistence type="evidence at protein level"/>
<sequence>MASGSGDSVTRRSVASQFFTQEEGPGIDGMTTSERVVDLLNQAALITNDSKITVLKQVQELIINKDPTLLDNFLDEIIAFQADKSIEVRKFVIGFIEEACKRDIELLLKLIANLNMLLRDENVNVVKKAILTMTQLYKVALQWMVKSRVISELQEACWDMVSAMAGDIILLLDSDNDGIRTHAIKFVEGLIVTLSPRMADSEIPRRQEHDISLDRIPRDHPYIQYNVLWEEGKAALEQLLKFMVHPAISSINLTTALGSLANIARQRPMFMSEVIQAYETLHANLPPTLAKSQVSSVRKNLKLHLLSVLKHPASLEFQAQITTLLVDLGTPQAEIARNMPSSKDTRKRPRDDSDSTLKKMKLEPNLGEDDEDKDLEPGPSGTSKASAQISGQSDTDITAEFLQPLLTPDNVANLVLISMVYLPEAMPASFQAIYTPVESAGTEAQIKHLARLMATQMTAAGLGPGVEQTKQCKEEPKEEKVVKTESVLIKRRLSAQGQAISVVGSLSSMSPLEEEAPQAKRRPEPIIPVTQPRLAGAGGRKKIFRLSDVLKPLTDAQVEAMKLGAVKRILRAEKAVACSGAAQVRIKILASLVTQFNSGLKAEVLSFILEDVRARLDLAFAWLYQEYNAYLAAGASGSLDKYEDCLIRLLSGLQEKPDQKDGIFTKVVLEAPLITESALEVVRKYCEDESRTYLGMSTLRDLIFKRPSRQFQYLHVLLDLSSHEKDKVRSQALLFIKRMYEKEQLREYVEKFALNYLQLLVHPNPPSVLFGADKDTEVAAPWTEETVKQCLYLYLALLPQNHKLIHELAAVYTEAIADIKRTVLRVIEQPIRGMGMNSPELLLLVENCPKGAETLVTRCLHSLTDKVPPSPELVKRVRDLYHKRLPDVRFLIPVLNGLEKKEVIQALPKLIKLNPIVVKEVFNRLLGTQHGEGNSALSPLNPGELLIALHNIDSVKCDMKSIIKATNLCFAERNVYTSEVLAVVMQQLMEQSPLPMLLMRTVIQSLTMYPRLGGFVMNILSRLIMKQVWKYPKVWEGFIKCCQRTKPQSFQVILQLPPQQLGAVFDKCPELREPLLAHVRSFTPHQQAHIPNSIMTILEASGKQEPEAKEAPAGPLEEDDLEPLTLAPAPAPRPPQDLIGLRLAQEKALKRQLEEEQKLKPGGVGAPSSSSPSPSPSARPGPPPSEEAMDFREEGPECETPGIFISMDDDSGLTEAALLDSSLEGPLPKETAAGGLTLKEERSPQTLAPVGEDAMKTPSPAAEDAREPEAKGNS</sequence>
<organism>
    <name type="scientific">Homo sapiens</name>
    <name type="common">Human</name>
    <dbReference type="NCBI Taxonomy" id="9606"/>
    <lineage>
        <taxon>Eukaryota</taxon>
        <taxon>Metazoa</taxon>
        <taxon>Chordata</taxon>
        <taxon>Craniata</taxon>
        <taxon>Vertebrata</taxon>
        <taxon>Euteleostomi</taxon>
        <taxon>Mammalia</taxon>
        <taxon>Eutheria</taxon>
        <taxon>Euarchontoglires</taxon>
        <taxon>Primates</taxon>
        <taxon>Haplorrhini</taxon>
        <taxon>Catarrhini</taxon>
        <taxon>Hominidae</taxon>
        <taxon>Homo</taxon>
    </lineage>
</organism>
<reference key="1">
    <citation type="journal article" date="1998" name="Mamm. Genome">
        <title>Six transcripts map within 200 kilobases of the myotonic dystrophy expanded repeat.</title>
        <authorList>
            <person name="Alwazzan M."/>
            <person name="Hamshere M.G."/>
            <person name="Lennon G.G."/>
            <person name="Brook J.D."/>
        </authorList>
    </citation>
    <scope>NUCLEOTIDE SEQUENCE [MRNA] (ISOFORM 1)</scope>
    <source>
        <tissue>Muscle</tissue>
    </source>
</reference>
<reference key="2">
    <citation type="submission" date="2005-03" db="EMBL/GenBank/DDBJ databases">
        <authorList>
            <person name="Totoki Y."/>
            <person name="Toyoda A."/>
            <person name="Takeda T."/>
            <person name="Sakaki Y."/>
            <person name="Tanaka A."/>
            <person name="Yokoyama S."/>
            <person name="Ohara O."/>
            <person name="Nagase T."/>
            <person name="Kikuno R.F."/>
        </authorList>
    </citation>
    <scope>NUCLEOTIDE SEQUENCE [LARGE SCALE MRNA] (ISOFORM 2)</scope>
    <source>
        <tissue>Brain</tissue>
    </source>
</reference>
<reference key="3">
    <citation type="journal article" date="1997" name="Somat. Cell Mol. Genet.">
        <title>Chromosomal localization to 19q13.3, partial genomic structure and 5' cDNA sequence of the human symplekin gene.</title>
        <authorList>
            <person name="Ueki K."/>
            <person name="Ramaswamy S."/>
            <person name="Billings S.J."/>
            <person name="Mohrenweiser H.W."/>
            <person name="Louis D.N."/>
        </authorList>
    </citation>
    <scope>NUCLEOTIDE SEQUENCE [MRNA] OF 1-155 (ISOFORM 1)</scope>
</reference>
<reference key="4">
    <citation type="journal article" date="2004" name="Genome Res.">
        <title>The status, quality, and expansion of the NIH full-length cDNA project: the Mammalian Gene Collection (MGC).</title>
        <authorList>
            <consortium name="The MGC Project Team"/>
        </authorList>
    </citation>
    <scope>NUCLEOTIDE SEQUENCE [LARGE SCALE MRNA] OF 17-1274 (ISOFORM 1)</scope>
    <source>
        <tissue>Kidney</tissue>
        <tissue>Lung</tissue>
    </source>
</reference>
<reference key="5">
    <citation type="journal article" date="1996" name="J. Cell Biol.">
        <title>Symplekin, a novel type of tight junction plaque protein.</title>
        <authorList>
            <person name="Keon B.H."/>
            <person name="Schaefer S."/>
            <person name="Kuhn C."/>
            <person name="Grund C."/>
            <person name="Franke W.W."/>
        </authorList>
    </citation>
    <scope>NUCLEOTIDE SEQUENCE [MRNA] OF 97-1274 (ISOFORM 1)</scope>
    <scope>IDENTIFICATION BY MASS SPECTROMETRY</scope>
    <scope>TISSUE SPECIFICITY</scope>
    <scope>SUBCELLULAR LOCATION</scope>
    <source>
        <tissue>Colon carcinoma</tissue>
    </source>
</reference>
<reference key="6">
    <citation type="journal article" date="2004" name="Nat. Genet.">
        <title>Complete sequencing and characterization of 21,243 full-length human cDNAs.</title>
        <authorList>
            <person name="Ota T."/>
            <person name="Suzuki Y."/>
            <person name="Nishikawa T."/>
            <person name="Otsuki T."/>
            <person name="Sugiyama T."/>
            <person name="Irie R."/>
            <person name="Wakamatsu A."/>
            <person name="Hayashi K."/>
            <person name="Sato H."/>
            <person name="Nagai K."/>
            <person name="Kimura K."/>
            <person name="Makita H."/>
            <person name="Sekine M."/>
            <person name="Obayashi M."/>
            <person name="Nishi T."/>
            <person name="Shibahara T."/>
            <person name="Tanaka T."/>
            <person name="Ishii S."/>
            <person name="Yamamoto J."/>
            <person name="Saito K."/>
            <person name="Kawai Y."/>
            <person name="Isono Y."/>
            <person name="Nakamura Y."/>
            <person name="Nagahari K."/>
            <person name="Murakami K."/>
            <person name="Yasuda T."/>
            <person name="Iwayanagi T."/>
            <person name="Wagatsuma M."/>
            <person name="Shiratori A."/>
            <person name="Sudo H."/>
            <person name="Hosoiri T."/>
            <person name="Kaku Y."/>
            <person name="Kodaira H."/>
            <person name="Kondo H."/>
            <person name="Sugawara M."/>
            <person name="Takahashi M."/>
            <person name="Kanda K."/>
            <person name="Yokoi T."/>
            <person name="Furuya T."/>
            <person name="Kikkawa E."/>
            <person name="Omura Y."/>
            <person name="Abe K."/>
            <person name="Kamihara K."/>
            <person name="Katsuta N."/>
            <person name="Sato K."/>
            <person name="Tanikawa M."/>
            <person name="Yamazaki M."/>
            <person name="Ninomiya K."/>
            <person name="Ishibashi T."/>
            <person name="Yamashita H."/>
            <person name="Murakawa K."/>
            <person name="Fujimori K."/>
            <person name="Tanai H."/>
            <person name="Kimata M."/>
            <person name="Watanabe M."/>
            <person name="Hiraoka S."/>
            <person name="Chiba Y."/>
            <person name="Ishida S."/>
            <person name="Ono Y."/>
            <person name="Takiguchi S."/>
            <person name="Watanabe S."/>
            <person name="Yosida M."/>
            <person name="Hotuta T."/>
            <person name="Kusano J."/>
            <person name="Kanehori K."/>
            <person name="Takahashi-Fujii A."/>
            <person name="Hara H."/>
            <person name="Tanase T.-O."/>
            <person name="Nomura Y."/>
            <person name="Togiya S."/>
            <person name="Komai F."/>
            <person name="Hara R."/>
            <person name="Takeuchi K."/>
            <person name="Arita M."/>
            <person name="Imose N."/>
            <person name="Musashino K."/>
            <person name="Yuuki H."/>
            <person name="Oshima A."/>
            <person name="Sasaki N."/>
            <person name="Aotsuka S."/>
            <person name="Yoshikawa Y."/>
            <person name="Matsunawa H."/>
            <person name="Ichihara T."/>
            <person name="Shiohata N."/>
            <person name="Sano S."/>
            <person name="Moriya S."/>
            <person name="Momiyama H."/>
            <person name="Satoh N."/>
            <person name="Takami S."/>
            <person name="Terashima Y."/>
            <person name="Suzuki O."/>
            <person name="Nakagawa S."/>
            <person name="Senoh A."/>
            <person name="Mizoguchi H."/>
            <person name="Goto Y."/>
            <person name="Shimizu F."/>
            <person name="Wakebe H."/>
            <person name="Hishigaki H."/>
            <person name="Watanabe T."/>
            <person name="Sugiyama A."/>
            <person name="Takemoto M."/>
            <person name="Kawakami B."/>
            <person name="Yamazaki M."/>
            <person name="Watanabe K."/>
            <person name="Kumagai A."/>
            <person name="Itakura S."/>
            <person name="Fukuzumi Y."/>
            <person name="Fujimori Y."/>
            <person name="Komiyama M."/>
            <person name="Tashiro H."/>
            <person name="Tanigami A."/>
            <person name="Fujiwara T."/>
            <person name="Ono T."/>
            <person name="Yamada K."/>
            <person name="Fujii Y."/>
            <person name="Ozaki K."/>
            <person name="Hirao M."/>
            <person name="Ohmori Y."/>
            <person name="Kawabata A."/>
            <person name="Hikiji T."/>
            <person name="Kobatake N."/>
            <person name="Inagaki H."/>
            <person name="Ikema Y."/>
            <person name="Okamoto S."/>
            <person name="Okitani R."/>
            <person name="Kawakami T."/>
            <person name="Noguchi S."/>
            <person name="Itoh T."/>
            <person name="Shigeta K."/>
            <person name="Senba T."/>
            <person name="Matsumura K."/>
            <person name="Nakajima Y."/>
            <person name="Mizuno T."/>
            <person name="Morinaga M."/>
            <person name="Sasaki M."/>
            <person name="Togashi T."/>
            <person name="Oyama M."/>
            <person name="Hata H."/>
            <person name="Watanabe M."/>
            <person name="Komatsu T."/>
            <person name="Mizushima-Sugano J."/>
            <person name="Satoh T."/>
            <person name="Shirai Y."/>
            <person name="Takahashi Y."/>
            <person name="Nakagawa K."/>
            <person name="Okumura K."/>
            <person name="Nagase T."/>
            <person name="Nomura N."/>
            <person name="Kikuchi H."/>
            <person name="Masuho Y."/>
            <person name="Yamashita R."/>
            <person name="Nakai K."/>
            <person name="Yada T."/>
            <person name="Nakamura Y."/>
            <person name="Ohara O."/>
            <person name="Isogai T."/>
            <person name="Sugano S."/>
        </authorList>
    </citation>
    <scope>NUCLEOTIDE SEQUENCE [LARGE SCALE MRNA] OF 426-533 (ISOFORM 1)</scope>
</reference>
<reference key="7">
    <citation type="journal article" date="2000" name="Mol. Cell. Biol.">
        <title>Complex protein interactions within the human polyadenylation machinery identify a novel component.</title>
        <authorList>
            <person name="Takagaki Y."/>
            <person name="Manley J.L."/>
        </authorList>
    </citation>
    <scope>INTERACTION WITH CSTF2</scope>
</reference>
<reference key="8">
    <citation type="journal article" date="2002" name="Mol. Biol. Cell">
        <title>Symplekin, a constitutive protein of karyo- and cytoplasmic particles involved in mRNA biogenesis in Xenopus laevis oocytes.</title>
        <authorList>
            <person name="Hofmann I."/>
            <person name="Schnoelzer M."/>
            <person name="Kaufmann I."/>
            <person name="Franke W.W."/>
        </authorList>
    </citation>
    <scope>SUBCELLULAR LOCATION</scope>
</reference>
<reference key="9">
    <citation type="journal article" date="2004" name="J. Biol. Chem.">
        <title>HSF1 modulation of Hsp70 mRNA polyadenylation via interaction with symplekin.</title>
        <authorList>
            <person name="Xing H."/>
            <person name="Mayhew C.N."/>
            <person name="Cullen K.E."/>
            <person name="Park-Sarge O.-K."/>
            <person name="Sarge K.D."/>
        </authorList>
    </citation>
    <scope>INTERACTION WITH HSF1</scope>
    <scope>SUBCELLULAR LOCATION</scope>
</reference>
<reference key="10">
    <citation type="journal article" date="2005" name="Genes Dev.">
        <title>Symplekin and multiple other polyadenylation factors participate in 3'-end maturation of histone mRNAs.</title>
        <authorList>
            <person name="Kolev N.G."/>
            <person name="Steitz J.A."/>
        </authorList>
    </citation>
    <scope>FUNCTION</scope>
    <scope>IDENTIFICATION IN A HEAT-SENSITIVE COMPLEX</scope>
</reference>
<reference key="11">
    <citation type="journal article" date="2008" name="EMBO Rep.">
        <title>Conserved motifs in both CPSF73 and CPSF100 are required to assemble the active endonuclease for histone mRNA 3'-end maturation.</title>
        <authorList>
            <person name="Kolev N.G."/>
            <person name="Yario T.A."/>
            <person name="Benson E."/>
            <person name="Steitz J.A."/>
        </authorList>
    </citation>
    <scope>INTERACTION WITH CPSF2 AND CPSF3</scope>
</reference>
<reference key="12">
    <citation type="journal article" date="2008" name="Proc. Natl. Acad. Sci. U.S.A.">
        <title>A quantitative atlas of mitotic phosphorylation.</title>
        <authorList>
            <person name="Dephoure N."/>
            <person name="Zhou C."/>
            <person name="Villen J."/>
            <person name="Beausoleil S.A."/>
            <person name="Bakalarski C.E."/>
            <person name="Elledge S.J."/>
            <person name="Gygi S.P."/>
        </authorList>
    </citation>
    <scope>PHOSPHORYLATION [LARGE SCALE ANALYSIS] AT SER-1243; THR-1257 AND SER-1259</scope>
    <scope>IDENTIFICATION BY MASS SPECTROMETRY [LARGE SCALE ANALYSIS]</scope>
    <source>
        <tissue>Cervix carcinoma</tissue>
    </source>
</reference>
<reference key="13">
    <citation type="journal article" date="2009" name="Sci. Signal.">
        <title>Quantitative phosphoproteomic analysis of T cell receptor signaling reveals system-wide modulation of protein-protein interactions.</title>
        <authorList>
            <person name="Mayya V."/>
            <person name="Lundgren D.H."/>
            <person name="Hwang S.-I."/>
            <person name="Rezaul K."/>
            <person name="Wu L."/>
            <person name="Eng J.K."/>
            <person name="Rodionov V."/>
            <person name="Han D.K."/>
        </authorList>
    </citation>
    <scope>PHOSPHORYLATION [LARGE SCALE ANALYSIS] AT SER-494</scope>
    <scope>IDENTIFICATION BY MASS SPECTROMETRY [LARGE SCALE ANALYSIS]</scope>
    <source>
        <tissue>Leukemic T-cell</tissue>
    </source>
</reference>
<reference key="14">
    <citation type="journal article" date="2010" name="Sci. Signal.">
        <title>Quantitative phosphoproteomics reveals widespread full phosphorylation site occupancy during mitosis.</title>
        <authorList>
            <person name="Olsen J.V."/>
            <person name="Vermeulen M."/>
            <person name="Santamaria A."/>
            <person name="Kumar C."/>
            <person name="Miller M.L."/>
            <person name="Jensen L.J."/>
            <person name="Gnad F."/>
            <person name="Cox J."/>
            <person name="Jensen T.S."/>
            <person name="Nigg E.A."/>
            <person name="Brunak S."/>
            <person name="Mann M."/>
        </authorList>
    </citation>
    <scope>PHOSPHORYLATION [LARGE SCALE ANALYSIS] AT SER-1243</scope>
    <scope>IDENTIFICATION BY MASS SPECTROMETRY [LARGE SCALE ANALYSIS]</scope>
    <source>
        <tissue>Cervix carcinoma</tissue>
    </source>
</reference>
<reference key="15">
    <citation type="journal article" date="2011" name="BMC Syst. Biol.">
        <title>Initial characterization of the human central proteome.</title>
        <authorList>
            <person name="Burkard T.R."/>
            <person name="Planyavsky M."/>
            <person name="Kaupe I."/>
            <person name="Breitwieser F.P."/>
            <person name="Buerckstuemmer T."/>
            <person name="Bennett K.L."/>
            <person name="Superti-Furga G."/>
            <person name="Colinge J."/>
        </authorList>
    </citation>
    <scope>IDENTIFICATION BY MASS SPECTROMETRY [LARGE SCALE ANALYSIS]</scope>
</reference>
<reference key="16">
    <citation type="journal article" date="2013" name="J. Proteome Res.">
        <title>Toward a comprehensive characterization of a human cancer cell phosphoproteome.</title>
        <authorList>
            <person name="Zhou H."/>
            <person name="Di Palma S."/>
            <person name="Preisinger C."/>
            <person name="Peng M."/>
            <person name="Polat A.N."/>
            <person name="Heck A.J."/>
            <person name="Mohammed S."/>
        </authorList>
    </citation>
    <scope>PHOSPHORYLATION [LARGE SCALE ANALYSIS] AT SER-13; SER-1243 AND SER-1259</scope>
    <scope>IDENTIFICATION BY MASS SPECTROMETRY [LARGE SCALE ANALYSIS]</scope>
    <source>
        <tissue>Cervix carcinoma</tissue>
        <tissue>Erythroleukemia</tissue>
    </source>
</reference>
<reference key="17">
    <citation type="journal article" date="2014" name="J. Proteomics">
        <title>An enzyme assisted RP-RPLC approach for in-depth analysis of human liver phosphoproteome.</title>
        <authorList>
            <person name="Bian Y."/>
            <person name="Song C."/>
            <person name="Cheng K."/>
            <person name="Dong M."/>
            <person name="Wang F."/>
            <person name="Huang J."/>
            <person name="Sun D."/>
            <person name="Wang L."/>
            <person name="Ye M."/>
            <person name="Zou H."/>
        </authorList>
    </citation>
    <scope>PHOSPHORYLATION [LARGE SCALE ANALYSIS] AT SER-494; SER-1221; SER-1222; SER-1243; THR-1257 AND SER-1259</scope>
    <scope>IDENTIFICATION BY MASS SPECTROMETRY [LARGE SCALE ANALYSIS]</scope>
    <source>
        <tissue>Liver</tissue>
    </source>
</reference>
<reference key="18">
    <citation type="journal article" date="2014" name="Nat. Struct. Mol. Biol.">
        <title>Uncovering global SUMOylation signaling networks in a site-specific manner.</title>
        <authorList>
            <person name="Hendriks I.A."/>
            <person name="D'Souza R.C."/>
            <person name="Yang B."/>
            <person name="Verlaan-de Vries M."/>
            <person name="Mann M."/>
            <person name="Vertegaal A.C."/>
        </authorList>
    </citation>
    <scope>SUMOYLATION [LARGE SCALE ANALYSIS] AT LYS-361 AND LYS-483</scope>
    <scope>IDENTIFICATION BY MASS SPECTROMETRY [LARGE SCALE ANALYSIS]</scope>
</reference>
<reference key="19">
    <citation type="journal article" date="2014" name="Proc. Natl. Acad. Sci. U.S.A.">
        <title>Mapping of SUMO sites and analysis of SUMOylation changes induced by external stimuli.</title>
        <authorList>
            <person name="Impens F."/>
            <person name="Radoshevich L."/>
            <person name="Cossart P."/>
            <person name="Ribet D."/>
        </authorList>
    </citation>
    <scope>SUMOYLATION [LARGE SCALE ANALYSIS] AT LYS-361 AND LYS-1239</scope>
    <scope>IDENTIFICATION BY MASS SPECTROMETRY [LARGE SCALE ANALYSIS]</scope>
</reference>
<reference key="20">
    <citation type="journal article" date="2015" name="Mol. Cell. Proteomics">
        <title>System-wide analysis of SUMOylation dynamics in response to replication stress reveals novel small ubiquitin-like modified target proteins and acceptor lysines relevant for genome stability.</title>
        <authorList>
            <person name="Xiao Z."/>
            <person name="Chang J.G."/>
            <person name="Hendriks I.A."/>
            <person name="Sigurdsson J.O."/>
            <person name="Olsen J.V."/>
            <person name="Vertegaal A.C."/>
        </authorList>
    </citation>
    <scope>SUMOYLATION [LARGE SCALE ANALYSIS] AT LYS-361 AND LYS-483</scope>
    <scope>IDENTIFICATION BY MASS SPECTROMETRY [LARGE SCALE ANALYSIS]</scope>
</reference>
<reference key="21">
    <citation type="journal article" date="2017" name="Nat. Struct. Mol. Biol.">
        <title>Site-specific mapping of the human SUMO proteome reveals co-modification with phosphorylation.</title>
        <authorList>
            <person name="Hendriks I.A."/>
            <person name="Lyon D."/>
            <person name="Young C."/>
            <person name="Jensen L.J."/>
            <person name="Vertegaal A.C."/>
            <person name="Nielsen M.L."/>
        </authorList>
    </citation>
    <scope>SUMOYLATION [LARGE SCALE ANALYSIS] AT LYS-361 AND LYS-483</scope>
    <scope>IDENTIFICATION BY MASS SPECTROMETRY [LARGE SCALE ANALYSIS]</scope>
</reference>
<reference key="22">
    <citation type="journal article" date="2010" name="Nature">
        <title>Crystal structure of the human symplekin-Ssu72-CTD phosphopeptide complex.</title>
        <authorList>
            <person name="Xiang K."/>
            <person name="Nagaike T."/>
            <person name="Xiang S."/>
            <person name="Kilic T."/>
            <person name="Beh M.M."/>
            <person name="Manley J.L."/>
            <person name="Tong L."/>
        </authorList>
    </citation>
    <scope>X-RAY CRYSTALLOGRAPHY (1.9 ANGSTROMS) OF 1-395 IN COMPLEX WITH SSU72</scope>
    <scope>FUNCTION</scope>
    <scope>MUTAGENESIS OF LYS-185</scope>
    <scope>INTERACTION WITH SSU72</scope>
</reference>
<reference key="23">
    <citation type="journal article" date="2012" name="Genes Dev.">
        <title>An unexpected binding mode for a Pol II CTD peptide phosphorylated at Ser7 in the active site of the CTD phosphatase Ssu72.</title>
        <authorList>
            <person name="Xiang K."/>
            <person name="Manley J.L."/>
            <person name="Tong L."/>
        </authorList>
    </citation>
    <scope>X-RAY CRYSTALLOGRAPHY (2.0 ANGSTROMS) OF 30-360 IN COMPLEX WITH SSU72</scope>
    <scope>INTERACTION WITH SSU72</scope>
</reference>
<feature type="chain" id="PRO_0000072385" description="Symplekin">
    <location>
        <begin position="1"/>
        <end position="1274"/>
    </location>
</feature>
<feature type="repeat" description="HEAT 1">
    <location>
        <begin position="31"/>
        <end position="64"/>
    </location>
</feature>
<feature type="repeat" description="HEAT 2">
    <location>
        <begin position="67"/>
        <end position="101"/>
    </location>
</feature>
<feature type="repeat" description="HEAT 3">
    <location>
        <begin position="104"/>
        <end position="146"/>
    </location>
</feature>
<feature type="repeat" description="HEAT 4">
    <location>
        <begin position="153"/>
        <end position="192"/>
    </location>
</feature>
<feature type="repeat" description="HEAT 5">
    <location>
        <begin position="227"/>
        <end position="266"/>
    </location>
</feature>
<feature type="region of interest" description="Interaction with HSF1" evidence="4">
    <location>
        <begin position="1"/>
        <end position="124"/>
    </location>
</feature>
<feature type="region of interest" description="Disordered" evidence="2">
    <location>
        <begin position="335"/>
        <end position="392"/>
    </location>
</feature>
<feature type="region of interest" description="Disordered" evidence="2">
    <location>
        <begin position="1102"/>
        <end position="1137"/>
    </location>
</feature>
<feature type="region of interest" description="Disordered" evidence="2">
    <location>
        <begin position="1149"/>
        <end position="1274"/>
    </location>
</feature>
<feature type="short sequence motif" description="Nuclear localization signal" evidence="1">
    <location>
        <begin position="345"/>
        <end position="360"/>
    </location>
</feature>
<feature type="compositionally biased region" description="Basic and acidic residues" evidence="2">
    <location>
        <begin position="349"/>
        <end position="362"/>
    </location>
</feature>
<feature type="compositionally biased region" description="Polar residues" evidence="2">
    <location>
        <begin position="380"/>
        <end position="392"/>
    </location>
</feature>
<feature type="compositionally biased region" description="Basic and acidic residues" evidence="2">
    <location>
        <begin position="1149"/>
        <end position="1159"/>
    </location>
</feature>
<feature type="compositionally biased region" description="Pro residues" evidence="2">
    <location>
        <begin position="1173"/>
        <end position="1185"/>
    </location>
</feature>
<feature type="compositionally biased region" description="Basic and acidic residues" evidence="2">
    <location>
        <begin position="1263"/>
        <end position="1274"/>
    </location>
</feature>
<feature type="modified residue" description="Phosphoserine" evidence="15">
    <location>
        <position position="13"/>
    </location>
</feature>
<feature type="modified residue" description="Phosphoserine" evidence="13 16">
    <location>
        <position position="494"/>
    </location>
</feature>
<feature type="modified residue" description="Phosphoserine" evidence="16">
    <location>
        <position position="1221"/>
    </location>
</feature>
<feature type="modified residue" description="Phosphoserine" evidence="16">
    <location>
        <position position="1222"/>
    </location>
</feature>
<feature type="modified residue" description="Phosphoserine" evidence="12 14 15 16">
    <location>
        <position position="1243"/>
    </location>
</feature>
<feature type="modified residue" description="Phosphothreonine" evidence="12 16">
    <location>
        <position position="1257"/>
    </location>
</feature>
<feature type="modified residue" description="Phosphoserine" evidence="12 15 16">
    <location>
        <position position="1259"/>
    </location>
</feature>
<feature type="cross-link" description="Glycyl lysine isopeptide (Lys-Gly) (interchain with G-Cter in SUMO1); alternate" evidence="17">
    <location>
        <position position="361"/>
    </location>
</feature>
<feature type="cross-link" description="Glycyl lysine isopeptide (Lys-Gly) (interchain with G-Cter in SUMO2); alternate" evidence="17 18 19 20">
    <location>
        <position position="361"/>
    </location>
</feature>
<feature type="cross-link" description="Glycyl lysine isopeptide (Lys-Gly) (interchain with G-Cter in SUMO2)" evidence="18 19 20">
    <location>
        <position position="483"/>
    </location>
</feature>
<feature type="cross-link" description="Glycyl lysine isopeptide (Lys-Gly) (interchain with G-Cter in SUMO1)" evidence="17">
    <location>
        <position position="1239"/>
    </location>
</feature>
<feature type="splice variant" id="VSP_014842" description="In isoform 2." evidence="10">
    <original>GSLDKYEDCLIRLLSGLQEKPDQKDGIFTKVVLEAP</original>
    <variation>PRLCWRRHSSQRVPWRWSASTARMRVAPIWACPHFET</variation>
    <location>
        <begin position="637"/>
        <end position="672"/>
    </location>
</feature>
<feature type="splice variant" id="VSP_014843" description="In isoform 2." evidence="10">
    <location>
        <begin position="673"/>
        <end position="1274"/>
    </location>
</feature>
<feature type="mutagenesis site" description="Abolishes stimulation of SSU72 phosphatase activity." evidence="7">
    <original>K</original>
    <variation>A</variation>
    <location>
        <position position="185"/>
    </location>
</feature>
<feature type="helix" evidence="21">
    <location>
        <begin position="32"/>
        <end position="45"/>
    </location>
</feature>
<feature type="helix" evidence="21">
    <location>
        <begin position="50"/>
        <end position="63"/>
    </location>
</feature>
<feature type="helix" evidence="21">
    <location>
        <begin position="67"/>
        <end position="73"/>
    </location>
</feature>
<feature type="helix" evidence="21">
    <location>
        <begin position="74"/>
        <end position="78"/>
    </location>
</feature>
<feature type="helix" evidence="21">
    <location>
        <begin position="79"/>
        <end position="82"/>
    </location>
</feature>
<feature type="helix" evidence="21">
    <location>
        <begin position="86"/>
        <end position="102"/>
    </location>
</feature>
<feature type="helix" evidence="21">
    <location>
        <begin position="104"/>
        <end position="106"/>
    </location>
</feature>
<feature type="helix" evidence="21">
    <location>
        <begin position="107"/>
        <end position="118"/>
    </location>
</feature>
<feature type="helix" evidence="21">
    <location>
        <begin position="123"/>
        <end position="146"/>
    </location>
</feature>
<feature type="helix" evidence="21">
    <location>
        <begin position="152"/>
        <end position="170"/>
    </location>
</feature>
<feature type="helix" evidence="21">
    <location>
        <begin position="171"/>
        <end position="173"/>
    </location>
</feature>
<feature type="helix" evidence="21">
    <location>
        <begin position="177"/>
        <end position="193"/>
    </location>
</feature>
<feature type="helix" evidence="21">
    <location>
        <begin position="205"/>
        <end position="207"/>
    </location>
</feature>
<feature type="helix" evidence="21">
    <location>
        <begin position="213"/>
        <end position="215"/>
    </location>
</feature>
<feature type="strand" evidence="21">
    <location>
        <begin position="221"/>
        <end position="223"/>
    </location>
</feature>
<feature type="helix" evidence="21">
    <location>
        <begin position="225"/>
        <end position="242"/>
    </location>
</feature>
<feature type="helix" evidence="21">
    <location>
        <begin position="250"/>
        <end position="266"/>
    </location>
</feature>
<feature type="helix" evidence="21">
    <location>
        <begin position="268"/>
        <end position="270"/>
    </location>
</feature>
<feature type="helix" evidence="21">
    <location>
        <begin position="271"/>
        <end position="283"/>
    </location>
</feature>
<feature type="helix" evidence="22">
    <location>
        <begin position="287"/>
        <end position="289"/>
    </location>
</feature>
<feature type="helix" evidence="21">
    <location>
        <begin position="291"/>
        <end position="293"/>
    </location>
</feature>
<feature type="helix" evidence="21">
    <location>
        <begin position="294"/>
        <end position="309"/>
    </location>
</feature>
<feature type="helix" evidence="21">
    <location>
        <begin position="312"/>
        <end position="317"/>
    </location>
</feature>
<feature type="helix" evidence="21">
    <location>
        <begin position="318"/>
        <end position="327"/>
    </location>
</feature>
<feature type="helix" evidence="21">
    <location>
        <begin position="332"/>
        <end position="337"/>
    </location>
</feature>
<feature type="helix" evidence="22">
    <location>
        <begin position="342"/>
        <end position="345"/>
    </location>
</feature>
<name>SYMPK_HUMAN</name>
<evidence type="ECO:0000255" key="1"/>
<evidence type="ECO:0000256" key="2">
    <source>
        <dbReference type="SAM" id="MobiDB-lite"/>
    </source>
</evidence>
<evidence type="ECO:0000269" key="3">
    <source>
    </source>
</evidence>
<evidence type="ECO:0000269" key="4">
    <source>
    </source>
</evidence>
<evidence type="ECO:0000269" key="5">
    <source>
    </source>
</evidence>
<evidence type="ECO:0000269" key="6">
    <source>
    </source>
</evidence>
<evidence type="ECO:0000269" key="7">
    <source>
    </source>
</evidence>
<evidence type="ECO:0000269" key="8">
    <source>
    </source>
</evidence>
<evidence type="ECO:0000269" key="9">
    <source>
    </source>
</evidence>
<evidence type="ECO:0000303" key="10">
    <source ref="2"/>
</evidence>
<evidence type="ECO:0000305" key="11"/>
<evidence type="ECO:0007744" key="12">
    <source>
    </source>
</evidence>
<evidence type="ECO:0007744" key="13">
    <source>
    </source>
</evidence>
<evidence type="ECO:0007744" key="14">
    <source>
    </source>
</evidence>
<evidence type="ECO:0007744" key="15">
    <source>
    </source>
</evidence>
<evidence type="ECO:0007744" key="16">
    <source>
    </source>
</evidence>
<evidence type="ECO:0007744" key="17">
    <source>
    </source>
</evidence>
<evidence type="ECO:0007744" key="18">
    <source>
    </source>
</evidence>
<evidence type="ECO:0007744" key="19">
    <source>
    </source>
</evidence>
<evidence type="ECO:0007744" key="20">
    <source>
    </source>
</evidence>
<evidence type="ECO:0007829" key="21">
    <source>
        <dbReference type="PDB" id="3O2T"/>
    </source>
</evidence>
<evidence type="ECO:0007829" key="22">
    <source>
        <dbReference type="PDB" id="3ODS"/>
    </source>
</evidence>
<comment type="function">
    <text evidence="5 7">Scaffold protein that functions as a component of a multimolecular complex involved in histone mRNA 3'-end processing. Specific component of the tight junction (TJ) plaque, but might not be an exclusively junctional component. May have a house-keeping rule. Is involved in pre-mRNA polyadenylation. Enhances SSU72 phosphatase activity.</text>
</comment>
<comment type="subunit">
    <text evidence="3 4 5 6 7 8">Found in a heat-sensitive complex at least composed of several cleavage and polyadenylation specific and cleavage stimulation factors (PubMed:16230528). Interacts with CPSF2, CPSF3 and CSTF2 (PubMed:10669729, PubMed:18688255). Interacts (via N-terminus) with HSF1; this interaction is direct and occurs upon heat shock (PubMed:14707147). Interacts with SSU72 (PubMed:20861839, PubMed:23070812).</text>
</comment>
<comment type="interaction">
    <interactant intactId="EBI-1051992">
        <id>Q92797</id>
    </interactant>
    <interactant intactId="EBI-750709">
        <id>P35613</id>
        <label>BSG</label>
    </interactant>
    <organismsDiffer>false</organismsDiffer>
    <experiments>2</experiments>
</comment>
<comment type="interaction">
    <interactant intactId="EBI-1051992">
        <id>Q92797</id>
    </interactant>
    <interactant intactId="EBI-1043224">
        <id>Q9P2I0</id>
        <label>CPSF2</label>
    </interactant>
    <organismsDiffer>false</organismsDiffer>
    <experiments>7</experiments>
</comment>
<comment type="interaction">
    <interactant intactId="EBI-1051992">
        <id>Q92797</id>
    </interactant>
    <interactant intactId="EBI-711360">
        <id>P33240</id>
        <label>CSTF2</label>
    </interactant>
    <organismsDiffer>false</organismsDiffer>
    <experiments>2</experiments>
</comment>
<comment type="interaction">
    <interactant intactId="EBI-1051992">
        <id>Q92797</id>
    </interactant>
    <interactant intactId="EBI-466029">
        <id>P42858</id>
        <label>HTT</label>
    </interactant>
    <organismsDiffer>false</organismsDiffer>
    <experiments>3</experiments>
</comment>
<comment type="interaction">
    <interactant intactId="EBI-1051992">
        <id>Q92797</id>
    </interactant>
    <interactant intactId="EBI-15879531">
        <id>Q9NP77-1</id>
        <label>SSU72</label>
    </interactant>
    <organismsDiffer>false</organismsDiffer>
    <experiments>3</experiments>
</comment>
<comment type="interaction">
    <interactant intactId="EBI-21560407">
        <id>Q92797-2</id>
    </interactant>
    <interactant intactId="EBI-718729">
        <id>P55212</id>
        <label>CASP6</label>
    </interactant>
    <organismsDiffer>false</organismsDiffer>
    <experiments>3</experiments>
</comment>
<comment type="interaction">
    <interactant intactId="EBI-21560407">
        <id>Q92797-2</id>
    </interactant>
    <interactant intactId="EBI-6624398">
        <id>P06307</id>
        <label>CCK</label>
    </interactant>
    <organismsDiffer>false</organismsDiffer>
    <experiments>3</experiments>
</comment>
<comment type="interaction">
    <interactant intactId="EBI-21560407">
        <id>Q92797-2</id>
    </interactant>
    <interactant intactId="EBI-446479">
        <id>P99999</id>
        <label>CYCS</label>
    </interactant>
    <organismsDiffer>false</organismsDiffer>
    <experiments>3</experiments>
</comment>
<comment type="interaction">
    <interactant intactId="EBI-21560407">
        <id>Q92797-2</id>
    </interactant>
    <interactant intactId="EBI-466029">
        <id>P42858</id>
        <label>HTT</label>
    </interactant>
    <organismsDiffer>false</organismsDiffer>
    <experiments>9</experiments>
</comment>
<comment type="interaction">
    <interactant intactId="EBI-21560407">
        <id>Q92797-2</id>
    </interactant>
    <interactant intactId="EBI-21591415">
        <id>P13473-2</id>
        <label>LAMP2</label>
    </interactant>
    <organismsDiffer>false</organismsDiffer>
    <experiments>3</experiments>
</comment>
<comment type="interaction">
    <interactant intactId="EBI-21560407">
        <id>Q92797-2</id>
    </interactant>
    <interactant intactId="EBI-5280197">
        <id>O75400-2</id>
        <label>PRPF40A</label>
    </interactant>
    <organismsDiffer>false</organismsDiffer>
    <experiments>3</experiments>
</comment>
<comment type="interaction">
    <interactant intactId="EBI-21560407">
        <id>Q92797-2</id>
    </interactant>
    <interactant intactId="EBI-286642">
        <id>P62826</id>
        <label>RAN</label>
    </interactant>
    <organismsDiffer>false</organismsDiffer>
    <experiments>3</experiments>
</comment>
<comment type="interaction">
    <interactant intactId="EBI-21560407">
        <id>Q92797-2</id>
    </interactant>
    <interactant intactId="EBI-985879">
        <id>P37840</id>
        <label>SNCA</label>
    </interactant>
    <organismsDiffer>false</organismsDiffer>
    <experiments>3</experiments>
</comment>
<comment type="interaction">
    <interactant intactId="EBI-21560407">
        <id>Q92797-2</id>
    </interactant>
    <interactant intactId="EBI-990792">
        <id>P00441</id>
        <label>SOD1</label>
    </interactant>
    <organismsDiffer>false</organismsDiffer>
    <experiments>3</experiments>
</comment>
<comment type="interaction">
    <interactant intactId="EBI-21560407">
        <id>Q92797-2</id>
    </interactant>
    <interactant intactId="EBI-372899">
        <id>Q13148</id>
        <label>TARDBP</label>
    </interactant>
    <organismsDiffer>false</organismsDiffer>
    <experiments>6</experiments>
</comment>
<comment type="subcellular location">
    <subcellularLocation>
        <location>Cytoplasm</location>
        <location>Cytoskeleton</location>
    </subcellularLocation>
    <subcellularLocation>
        <location>Cell junction</location>
        <location>Tight junction</location>
    </subcellularLocation>
    <subcellularLocation>
        <location>Cell membrane</location>
        <topology>Peripheral membrane protein</topology>
        <orientation>Cytoplasmic side</orientation>
    </subcellularLocation>
    <subcellularLocation>
        <location>Cell junction</location>
    </subcellularLocation>
    <subcellularLocation>
        <location>Nucleus</location>
        <location>Nucleoplasm</location>
    </subcellularLocation>
    <text evidence="4">Cytoplasmic face of adhesion plaques (major) and nucleoplasm (minor) (in cells with TJ). Nucleoplasm (in cells without TJ). Nuclear bodies of heat-stressed cells. Colocalizes with HSF1 in nuclear stress bodies upon heat shock (PubMed:14707147).</text>
</comment>
<comment type="alternative products">
    <event type="alternative splicing"/>
    <isoform>
        <id>Q92797-1</id>
        <name>1</name>
        <sequence type="displayed"/>
    </isoform>
    <isoform>
        <id>Q92797-2</id>
        <name>2</name>
        <sequence type="described" ref="VSP_014842 VSP_014843"/>
    </isoform>
    <text>Additional isoforms seem to exist.</text>
</comment>
<comment type="tissue specificity">
    <text evidence="9">In testis, expressed in polar epithelia and Sertoli cells but not in vascular endothelia. The protein is detected in stomach, duodenum, pancreas, liver, fetal brain, carcinomas, lens-forming cells, fibroblasts, lymphocytes, lymphoma cells, erythroleukemia cells but not in endothelium of vessels, epidermis, intercalated disks, Purkinje fiber cells of the heart and lymph node.</text>
</comment>
<comment type="domain">
    <text>The HEAT repeats have been determined based on 3D-structure analysis of the D.melanogaster ortholog and are not detected by sequence-based prediction programs.</text>
</comment>
<comment type="miscellaneous">
    <text>Could be used as a differentiation marker in the differential diagnosis of tumors.</text>
</comment>
<comment type="miscellaneous">
    <molecule>Isoform 2</molecule>
    <text evidence="11">May be produced at very low levels due to a premature stop codon in the mRNA, leading to nonsense-mediated mRNA decay.</text>
</comment>
<comment type="similarity">
    <text evidence="11">Belongs to the Symplekin family.</text>
</comment>
<comment type="sequence caution" evidence="11">
    <conflict type="erroneous initiation">
        <sequence resource="EMBL-CDS" id="AAC50667"/>
    </conflict>
    <text>Truncated N-terminus.</text>
</comment>
<comment type="sequence caution" evidence="11">
    <conflict type="miscellaneous discrepancy">
        <sequence resource="EMBL-CDS" id="AAH30214"/>
    </conflict>
    <text>Contaminating sequence. Potential poly-A sequence.</text>
</comment>
<comment type="sequence caution" evidence="11">
    <conflict type="erroneous initiation">
        <sequence resource="EMBL-CDS" id="BAD92261"/>
    </conflict>
    <text>Extended N-terminus.</text>
</comment>
<comment type="sequence caution" evidence="11">
    <conflict type="frameshift">
        <sequence resource="EMBL-CDS" id="CAA71861"/>
    </conflict>
</comment>
<dbReference type="EMBL" id="Y10931">
    <property type="protein sequence ID" value="CAA71861.1"/>
    <property type="status" value="ALT_FRAME"/>
    <property type="molecule type" value="mRNA"/>
</dbReference>
<dbReference type="EMBL" id="AB209024">
    <property type="protein sequence ID" value="BAD92261.1"/>
    <property type="status" value="ALT_INIT"/>
    <property type="molecule type" value="mRNA"/>
</dbReference>
<dbReference type="EMBL" id="U88726">
    <property type="protein sequence ID" value="AAB58578.1"/>
    <property type="molecule type" value="mRNA"/>
</dbReference>
<dbReference type="EMBL" id="BC006536">
    <property type="protein sequence ID" value="AAH06536.2"/>
    <property type="molecule type" value="mRNA"/>
</dbReference>
<dbReference type="EMBL" id="BC006567">
    <property type="protein sequence ID" value="AAH06567.2"/>
    <property type="molecule type" value="mRNA"/>
</dbReference>
<dbReference type="EMBL" id="BC030214">
    <property type="protein sequence ID" value="AAH30214.1"/>
    <property type="status" value="ALT_SEQ"/>
    <property type="molecule type" value="mRNA"/>
</dbReference>
<dbReference type="EMBL" id="U49240">
    <property type="protein sequence ID" value="AAC50667.1"/>
    <property type="status" value="ALT_INIT"/>
    <property type="molecule type" value="mRNA"/>
</dbReference>
<dbReference type="EMBL" id="DB328640">
    <property type="status" value="NOT_ANNOTATED_CDS"/>
    <property type="molecule type" value="mRNA"/>
</dbReference>
<dbReference type="CCDS" id="CCDS12676.2">
    <molecule id="Q92797-1"/>
</dbReference>
<dbReference type="RefSeq" id="NP_004810.2">
    <molecule id="Q92797-1"/>
    <property type="nucleotide sequence ID" value="NM_004819.3"/>
</dbReference>
<dbReference type="RefSeq" id="XP_005259343.1">
    <property type="nucleotide sequence ID" value="XM_005259286.1"/>
</dbReference>
<dbReference type="RefSeq" id="XP_011525656.1">
    <molecule id="Q92797-1"/>
    <property type="nucleotide sequence ID" value="XM_011527354.2"/>
</dbReference>
<dbReference type="RefSeq" id="XP_054178243.1">
    <molecule id="Q92797-1"/>
    <property type="nucleotide sequence ID" value="XM_054322268.1"/>
</dbReference>
<dbReference type="PDB" id="3O2Q">
    <property type="method" value="X-ray"/>
    <property type="resolution" value="2.40 A"/>
    <property type="chains" value="A/D=30-360"/>
</dbReference>
<dbReference type="PDB" id="3O2S">
    <property type="method" value="X-ray"/>
    <property type="resolution" value="2.50 A"/>
    <property type="chains" value="A=30-360"/>
</dbReference>
<dbReference type="PDB" id="3O2T">
    <property type="method" value="X-ray"/>
    <property type="resolution" value="1.40 A"/>
    <property type="chains" value="A=30-395"/>
</dbReference>
<dbReference type="PDB" id="3ODR">
    <property type="method" value="X-ray"/>
    <property type="resolution" value="2.20 A"/>
    <property type="chains" value="A=1-395"/>
</dbReference>
<dbReference type="PDB" id="3ODS">
    <property type="method" value="X-ray"/>
    <property type="resolution" value="1.90 A"/>
    <property type="chains" value="A=1-395"/>
</dbReference>
<dbReference type="PDB" id="4H3H">
    <property type="method" value="X-ray"/>
    <property type="resolution" value="2.20 A"/>
    <property type="chains" value="A/D=30-360"/>
</dbReference>
<dbReference type="PDB" id="4H3K">
    <property type="method" value="X-ray"/>
    <property type="resolution" value="2.00 A"/>
    <property type="chains" value="A/D=30-360"/>
</dbReference>
<dbReference type="PDB" id="6V4X">
    <property type="method" value="EM"/>
    <property type="resolution" value="3.20 A"/>
    <property type="chains" value="J=30-1101"/>
</dbReference>
<dbReference type="PDBsum" id="3O2Q"/>
<dbReference type="PDBsum" id="3O2S"/>
<dbReference type="PDBsum" id="3O2T"/>
<dbReference type="PDBsum" id="3ODR"/>
<dbReference type="PDBsum" id="3ODS"/>
<dbReference type="PDBsum" id="4H3H"/>
<dbReference type="PDBsum" id="4H3K"/>
<dbReference type="PDBsum" id="6V4X"/>
<dbReference type="EMDB" id="EMD-20859"/>
<dbReference type="EMDB" id="EMD-21050"/>
<dbReference type="SMR" id="Q92797"/>
<dbReference type="BioGRID" id="113833">
    <property type="interactions" value="247"/>
</dbReference>
<dbReference type="ComplexPortal" id="CPX-2694">
    <property type="entry name" value="Histone pre-RNA core cleavage complex"/>
</dbReference>
<dbReference type="ComplexPortal" id="CPX-2698">
    <property type="entry name" value="pre-mRNA cleavage and polyadenylation specificity factor complex"/>
</dbReference>
<dbReference type="CORUM" id="Q92797"/>
<dbReference type="DIP" id="DIP-42506N"/>
<dbReference type="FunCoup" id="Q92797">
    <property type="interactions" value="4362"/>
</dbReference>
<dbReference type="IntAct" id="Q92797">
    <property type="interactions" value="98"/>
</dbReference>
<dbReference type="MINT" id="Q92797"/>
<dbReference type="STRING" id="9606.ENSP00000245934"/>
<dbReference type="GlyCosmos" id="Q92797">
    <property type="glycosylation" value="1 site, 1 glycan"/>
</dbReference>
<dbReference type="GlyGen" id="Q92797">
    <property type="glycosylation" value="4 sites, 1 O-linked glycan (4 sites)"/>
</dbReference>
<dbReference type="iPTMnet" id="Q92797"/>
<dbReference type="MetOSite" id="Q92797"/>
<dbReference type="PhosphoSitePlus" id="Q92797"/>
<dbReference type="SwissPalm" id="Q92797"/>
<dbReference type="BioMuta" id="SYMPK"/>
<dbReference type="DMDM" id="71153180"/>
<dbReference type="jPOST" id="Q92797"/>
<dbReference type="MassIVE" id="Q92797"/>
<dbReference type="PaxDb" id="9606-ENSP00000245934"/>
<dbReference type="PeptideAtlas" id="Q92797"/>
<dbReference type="ProteomicsDB" id="75477">
    <molecule id="Q92797-1"/>
</dbReference>
<dbReference type="ProteomicsDB" id="75478">
    <molecule id="Q92797-2"/>
</dbReference>
<dbReference type="Pumba" id="Q92797"/>
<dbReference type="Antibodypedia" id="18041">
    <property type="antibodies" value="185 antibodies from 29 providers"/>
</dbReference>
<dbReference type="DNASU" id="8189"/>
<dbReference type="Ensembl" id="ENST00000245934.12">
    <molecule id="Q92797-1"/>
    <property type="protein sequence ID" value="ENSP00000245934.7"/>
    <property type="gene ID" value="ENSG00000125755.20"/>
</dbReference>
<dbReference type="Ensembl" id="ENST00000715464.1">
    <molecule id="Q92797-1"/>
    <property type="protein sequence ID" value="ENSP00000520453.1"/>
    <property type="gene ID" value="ENSG00000125755.20"/>
</dbReference>
<dbReference type="GeneID" id="8189"/>
<dbReference type="KEGG" id="hsa:8189"/>
<dbReference type="MANE-Select" id="ENST00000245934.12">
    <property type="protein sequence ID" value="ENSP00000245934.7"/>
    <property type="RefSeq nucleotide sequence ID" value="NM_004819.3"/>
    <property type="RefSeq protein sequence ID" value="NP_004810.2"/>
</dbReference>
<dbReference type="UCSC" id="uc002pdn.4">
    <molecule id="Q92797-1"/>
    <property type="organism name" value="human"/>
</dbReference>
<dbReference type="AGR" id="HGNC:22935"/>
<dbReference type="CTD" id="8189"/>
<dbReference type="DisGeNET" id="8189"/>
<dbReference type="GeneCards" id="SYMPK"/>
<dbReference type="HGNC" id="HGNC:22935">
    <property type="gene designation" value="SYMPK"/>
</dbReference>
<dbReference type="HPA" id="ENSG00000125755">
    <property type="expression patterns" value="Low tissue specificity"/>
</dbReference>
<dbReference type="MIM" id="602388">
    <property type="type" value="gene"/>
</dbReference>
<dbReference type="neXtProt" id="NX_Q92797"/>
<dbReference type="OpenTargets" id="ENSG00000125755"/>
<dbReference type="PharmGKB" id="PA134896920"/>
<dbReference type="VEuPathDB" id="HostDB:ENSG00000125755"/>
<dbReference type="eggNOG" id="KOG1895">
    <property type="taxonomic scope" value="Eukaryota"/>
</dbReference>
<dbReference type="GeneTree" id="ENSGT00390000017045"/>
<dbReference type="HOGENOM" id="CLU_004756_1_0_1"/>
<dbReference type="InParanoid" id="Q92797"/>
<dbReference type="OMA" id="NVRYGIM"/>
<dbReference type="OrthoDB" id="331600at2759"/>
<dbReference type="PAN-GO" id="Q92797">
    <property type="GO annotations" value="2 GO annotations based on evolutionary models"/>
</dbReference>
<dbReference type="PhylomeDB" id="Q92797"/>
<dbReference type="TreeFam" id="TF312860"/>
<dbReference type="PathwayCommons" id="Q92797"/>
<dbReference type="Reactome" id="R-HSA-159231">
    <property type="pathway name" value="Transport of Mature mRNA Derived from an Intronless Transcript"/>
</dbReference>
<dbReference type="Reactome" id="R-HSA-72187">
    <property type="pathway name" value="mRNA 3'-end processing"/>
</dbReference>
<dbReference type="Reactome" id="R-HSA-72203">
    <property type="pathway name" value="Processing of Capped Intron-Containing Pre-mRNA"/>
</dbReference>
<dbReference type="Reactome" id="R-HSA-73856">
    <property type="pathway name" value="RNA Polymerase II Transcription Termination"/>
</dbReference>
<dbReference type="Reactome" id="R-HSA-77595">
    <property type="pathway name" value="Processing of Intronless Pre-mRNAs"/>
</dbReference>
<dbReference type="SignaLink" id="Q92797"/>
<dbReference type="SIGNOR" id="Q92797"/>
<dbReference type="BioGRID-ORCS" id="8189">
    <property type="hits" value="797 hits in 1166 CRISPR screens"/>
</dbReference>
<dbReference type="ChiTaRS" id="SYMPK">
    <property type="organism name" value="human"/>
</dbReference>
<dbReference type="EvolutionaryTrace" id="Q92797"/>
<dbReference type="GeneWiki" id="SYMPK"/>
<dbReference type="GenomeRNAi" id="8189"/>
<dbReference type="Pharos" id="Q92797">
    <property type="development level" value="Tbio"/>
</dbReference>
<dbReference type="PRO" id="PR:Q92797"/>
<dbReference type="Proteomes" id="UP000005640">
    <property type="component" value="Chromosome 19"/>
</dbReference>
<dbReference type="RNAct" id="Q92797">
    <property type="molecule type" value="protein"/>
</dbReference>
<dbReference type="Bgee" id="ENSG00000125755">
    <property type="expression patterns" value="Expressed in left testis and 176 other cell types or tissues"/>
</dbReference>
<dbReference type="ExpressionAtlas" id="Q92797">
    <property type="expression patterns" value="baseline and differential"/>
</dbReference>
<dbReference type="GO" id="GO:0005923">
    <property type="term" value="C:bicellular tight junction"/>
    <property type="evidence" value="ECO:0007669"/>
    <property type="project" value="UniProtKB-SubCell"/>
</dbReference>
<dbReference type="GO" id="GO:0005737">
    <property type="term" value="C:cytoplasm"/>
    <property type="evidence" value="ECO:0000314"/>
    <property type="project" value="UniProtKB"/>
</dbReference>
<dbReference type="GO" id="GO:0005856">
    <property type="term" value="C:cytoskeleton"/>
    <property type="evidence" value="ECO:0007669"/>
    <property type="project" value="UniProtKB-SubCell"/>
</dbReference>
<dbReference type="GO" id="GO:0005829">
    <property type="term" value="C:cytosol"/>
    <property type="evidence" value="ECO:0000314"/>
    <property type="project" value="HPA"/>
</dbReference>
<dbReference type="GO" id="GO:0005847">
    <property type="term" value="C:mRNA cleavage and polyadenylation specificity factor complex"/>
    <property type="evidence" value="ECO:0000318"/>
    <property type="project" value="GO_Central"/>
</dbReference>
<dbReference type="GO" id="GO:0016604">
    <property type="term" value="C:nuclear body"/>
    <property type="evidence" value="ECO:0007669"/>
    <property type="project" value="Ensembl"/>
</dbReference>
<dbReference type="GO" id="GO:0097165">
    <property type="term" value="C:nuclear stress granule"/>
    <property type="evidence" value="ECO:0000314"/>
    <property type="project" value="UniProtKB"/>
</dbReference>
<dbReference type="GO" id="GO:0005654">
    <property type="term" value="C:nucleoplasm"/>
    <property type="evidence" value="ECO:0000314"/>
    <property type="project" value="HPA"/>
</dbReference>
<dbReference type="GO" id="GO:0005886">
    <property type="term" value="C:plasma membrane"/>
    <property type="evidence" value="ECO:0000314"/>
    <property type="project" value="HPA"/>
</dbReference>
<dbReference type="GO" id="GO:0007155">
    <property type="term" value="P:cell adhesion"/>
    <property type="evidence" value="ECO:0007669"/>
    <property type="project" value="UniProtKB-KW"/>
</dbReference>
<dbReference type="GO" id="GO:0006397">
    <property type="term" value="P:mRNA processing"/>
    <property type="evidence" value="ECO:0007669"/>
    <property type="project" value="UniProtKB-KW"/>
</dbReference>
<dbReference type="GO" id="GO:0032091">
    <property type="term" value="P:negative regulation of protein binding"/>
    <property type="evidence" value="ECO:0000315"/>
    <property type="project" value="UniProtKB"/>
</dbReference>
<dbReference type="FunFam" id="1.25.10.10:FF:000106">
    <property type="entry name" value="Symplekin"/>
    <property type="match status" value="1"/>
</dbReference>
<dbReference type="Gene3D" id="1.25.10.10">
    <property type="entry name" value="Leucine-rich Repeat Variant"/>
    <property type="match status" value="1"/>
</dbReference>
<dbReference type="InterPro" id="IPR011989">
    <property type="entry name" value="ARM-like"/>
</dbReference>
<dbReference type="InterPro" id="IPR016024">
    <property type="entry name" value="ARM-type_fold"/>
</dbReference>
<dbReference type="InterPro" id="IPR021850">
    <property type="entry name" value="Symplekin/Pta1"/>
</dbReference>
<dbReference type="InterPro" id="IPR032460">
    <property type="entry name" value="Symplekin/Pta1_N"/>
</dbReference>
<dbReference type="InterPro" id="IPR022075">
    <property type="entry name" value="Symplekin_C"/>
</dbReference>
<dbReference type="PANTHER" id="PTHR15245:SF20">
    <property type="entry name" value="SYMPLEKIN"/>
    <property type="match status" value="1"/>
</dbReference>
<dbReference type="PANTHER" id="PTHR15245">
    <property type="entry name" value="SYMPLEKIN-RELATED"/>
    <property type="match status" value="1"/>
</dbReference>
<dbReference type="Pfam" id="PF11935">
    <property type="entry name" value="SYMPK_PTA1_N"/>
    <property type="match status" value="1"/>
</dbReference>
<dbReference type="Pfam" id="PF12295">
    <property type="entry name" value="Symplekin_C"/>
    <property type="match status" value="1"/>
</dbReference>
<dbReference type="SUPFAM" id="SSF48371">
    <property type="entry name" value="ARM repeat"/>
    <property type="match status" value="1"/>
</dbReference>
<gene>
    <name type="primary">SYMPK</name>
    <name type="synonym">SPK</name>
</gene>
<protein>
    <recommendedName>
        <fullName>Symplekin</fullName>
    </recommendedName>
</protein>
<accession>Q92797</accession>
<accession>O00521</accession>
<accession>O00689</accession>
<accession>O00733</accession>
<accession>Q59GT5</accession>
<accession>Q8N2U5</accession>